<sequence length="260" mass="28763">MSSTLQAILDDTRRDLAARKSAARTKEFEKRAAEHTPRGFRTALWERAQAGVAVIAELKKASPSKGLIRANFDVIALAKELEEAGAAALSVLTDVPHFQGSLENLERASQTVRIPCLRKDFILDPAQIVEARAYGADAILLIVAALTDLDLRNLRDEAKRYGLDVLCEVHDRDELKRAADLGFDLIGVNNRNLKTFRVDIENSLRFAEEFPPNALRVAESGIHSREDIDRLRDAAYSAFLIGESLMRADSPSATLRELIG</sequence>
<feature type="chain" id="PRO_1000095844" description="Indole-3-glycerol phosphate synthase">
    <location>
        <begin position="1"/>
        <end position="260"/>
    </location>
</feature>
<keyword id="KW-0028">Amino-acid biosynthesis</keyword>
<keyword id="KW-0057">Aromatic amino acid biosynthesis</keyword>
<keyword id="KW-0210">Decarboxylase</keyword>
<keyword id="KW-0456">Lyase</keyword>
<keyword id="KW-1185">Reference proteome</keyword>
<keyword id="KW-0822">Tryptophan biosynthesis</keyword>
<name>TRPC_KORVE</name>
<comment type="catalytic activity">
    <reaction evidence="1">
        <text>1-(2-carboxyphenylamino)-1-deoxy-D-ribulose 5-phosphate + H(+) = (1S,2R)-1-C-(indol-3-yl)glycerol 3-phosphate + CO2 + H2O</text>
        <dbReference type="Rhea" id="RHEA:23476"/>
        <dbReference type="ChEBI" id="CHEBI:15377"/>
        <dbReference type="ChEBI" id="CHEBI:15378"/>
        <dbReference type="ChEBI" id="CHEBI:16526"/>
        <dbReference type="ChEBI" id="CHEBI:58613"/>
        <dbReference type="ChEBI" id="CHEBI:58866"/>
        <dbReference type="EC" id="4.1.1.48"/>
    </reaction>
</comment>
<comment type="pathway">
    <text evidence="1">Amino-acid biosynthesis; L-tryptophan biosynthesis; L-tryptophan from chorismate: step 4/5.</text>
</comment>
<comment type="similarity">
    <text evidence="1">Belongs to the TrpC family.</text>
</comment>
<organism>
    <name type="scientific">Koribacter versatilis (strain Ellin345)</name>
    <dbReference type="NCBI Taxonomy" id="204669"/>
    <lineage>
        <taxon>Bacteria</taxon>
        <taxon>Pseudomonadati</taxon>
        <taxon>Acidobacteriota</taxon>
        <taxon>Terriglobia</taxon>
        <taxon>Terriglobales</taxon>
        <taxon>Candidatus Korobacteraceae</taxon>
        <taxon>Candidatus Korobacter</taxon>
    </lineage>
</organism>
<protein>
    <recommendedName>
        <fullName evidence="1">Indole-3-glycerol phosphate synthase</fullName>
        <shortName evidence="1">IGPS</shortName>
        <ecNumber evidence="1">4.1.1.48</ecNumber>
    </recommendedName>
</protein>
<gene>
    <name evidence="1" type="primary">trpC</name>
    <name type="ordered locus">Acid345_1156</name>
</gene>
<reference key="1">
    <citation type="journal article" date="2009" name="Appl. Environ. Microbiol.">
        <title>Three genomes from the phylum Acidobacteria provide insight into the lifestyles of these microorganisms in soils.</title>
        <authorList>
            <person name="Ward N.L."/>
            <person name="Challacombe J.F."/>
            <person name="Janssen P.H."/>
            <person name="Henrissat B."/>
            <person name="Coutinho P.M."/>
            <person name="Wu M."/>
            <person name="Xie G."/>
            <person name="Haft D.H."/>
            <person name="Sait M."/>
            <person name="Badger J."/>
            <person name="Barabote R.D."/>
            <person name="Bradley B."/>
            <person name="Brettin T.S."/>
            <person name="Brinkac L.M."/>
            <person name="Bruce D."/>
            <person name="Creasy T."/>
            <person name="Daugherty S.C."/>
            <person name="Davidsen T.M."/>
            <person name="DeBoy R.T."/>
            <person name="Detter J.C."/>
            <person name="Dodson R.J."/>
            <person name="Durkin A.S."/>
            <person name="Ganapathy A."/>
            <person name="Gwinn-Giglio M."/>
            <person name="Han C.S."/>
            <person name="Khouri H."/>
            <person name="Kiss H."/>
            <person name="Kothari S.P."/>
            <person name="Madupu R."/>
            <person name="Nelson K.E."/>
            <person name="Nelson W.C."/>
            <person name="Paulsen I."/>
            <person name="Penn K."/>
            <person name="Ren Q."/>
            <person name="Rosovitz M.J."/>
            <person name="Selengut J.D."/>
            <person name="Shrivastava S."/>
            <person name="Sullivan S.A."/>
            <person name="Tapia R."/>
            <person name="Thompson L.S."/>
            <person name="Watkins K.L."/>
            <person name="Yang Q."/>
            <person name="Yu C."/>
            <person name="Zafar N."/>
            <person name="Zhou L."/>
            <person name="Kuske C.R."/>
        </authorList>
    </citation>
    <scope>NUCLEOTIDE SEQUENCE [LARGE SCALE GENOMIC DNA]</scope>
    <source>
        <strain>Ellin345</strain>
    </source>
</reference>
<evidence type="ECO:0000255" key="1">
    <source>
        <dbReference type="HAMAP-Rule" id="MF_00134"/>
    </source>
</evidence>
<accession>Q1ISJ1</accession>
<dbReference type="EC" id="4.1.1.48" evidence="1"/>
<dbReference type="EMBL" id="CP000360">
    <property type="protein sequence ID" value="ABF40159.1"/>
    <property type="molecule type" value="Genomic_DNA"/>
</dbReference>
<dbReference type="RefSeq" id="WP_011521961.1">
    <property type="nucleotide sequence ID" value="NC_008009.1"/>
</dbReference>
<dbReference type="SMR" id="Q1ISJ1"/>
<dbReference type="STRING" id="204669.Acid345_1156"/>
<dbReference type="EnsemblBacteria" id="ABF40159">
    <property type="protein sequence ID" value="ABF40159"/>
    <property type="gene ID" value="Acid345_1156"/>
</dbReference>
<dbReference type="KEGG" id="aba:Acid345_1156"/>
<dbReference type="eggNOG" id="COG0134">
    <property type="taxonomic scope" value="Bacteria"/>
</dbReference>
<dbReference type="HOGENOM" id="CLU_034247_2_0_0"/>
<dbReference type="OrthoDB" id="9804217at2"/>
<dbReference type="UniPathway" id="UPA00035">
    <property type="reaction ID" value="UER00043"/>
</dbReference>
<dbReference type="Proteomes" id="UP000002432">
    <property type="component" value="Chromosome"/>
</dbReference>
<dbReference type="GO" id="GO:0004425">
    <property type="term" value="F:indole-3-glycerol-phosphate synthase activity"/>
    <property type="evidence" value="ECO:0007669"/>
    <property type="project" value="UniProtKB-UniRule"/>
</dbReference>
<dbReference type="GO" id="GO:0004640">
    <property type="term" value="F:phosphoribosylanthranilate isomerase activity"/>
    <property type="evidence" value="ECO:0007669"/>
    <property type="project" value="TreeGrafter"/>
</dbReference>
<dbReference type="GO" id="GO:0000162">
    <property type="term" value="P:L-tryptophan biosynthetic process"/>
    <property type="evidence" value="ECO:0007669"/>
    <property type="project" value="UniProtKB-UniRule"/>
</dbReference>
<dbReference type="CDD" id="cd00331">
    <property type="entry name" value="IGPS"/>
    <property type="match status" value="1"/>
</dbReference>
<dbReference type="FunFam" id="3.20.20.70:FF:000024">
    <property type="entry name" value="Indole-3-glycerol phosphate synthase"/>
    <property type="match status" value="1"/>
</dbReference>
<dbReference type="Gene3D" id="3.20.20.70">
    <property type="entry name" value="Aldolase class I"/>
    <property type="match status" value="1"/>
</dbReference>
<dbReference type="HAMAP" id="MF_00134_A">
    <property type="entry name" value="IGPS_A"/>
    <property type="match status" value="1"/>
</dbReference>
<dbReference type="HAMAP" id="MF_00134_B">
    <property type="entry name" value="IGPS_B"/>
    <property type="match status" value="1"/>
</dbReference>
<dbReference type="InterPro" id="IPR013785">
    <property type="entry name" value="Aldolase_TIM"/>
</dbReference>
<dbReference type="InterPro" id="IPR045186">
    <property type="entry name" value="Indole-3-glycerol_P_synth"/>
</dbReference>
<dbReference type="InterPro" id="IPR013798">
    <property type="entry name" value="Indole-3-glycerol_P_synth_dom"/>
</dbReference>
<dbReference type="InterPro" id="IPR001468">
    <property type="entry name" value="Indole-3-GlycerolPSynthase_CS"/>
</dbReference>
<dbReference type="InterPro" id="IPR011060">
    <property type="entry name" value="RibuloseP-bd_barrel"/>
</dbReference>
<dbReference type="NCBIfam" id="NF001377">
    <property type="entry name" value="PRK00278.2-4"/>
    <property type="match status" value="1"/>
</dbReference>
<dbReference type="PANTHER" id="PTHR22854:SF2">
    <property type="entry name" value="INDOLE-3-GLYCEROL-PHOSPHATE SYNTHASE"/>
    <property type="match status" value="1"/>
</dbReference>
<dbReference type="PANTHER" id="PTHR22854">
    <property type="entry name" value="TRYPTOPHAN BIOSYNTHESIS PROTEIN"/>
    <property type="match status" value="1"/>
</dbReference>
<dbReference type="Pfam" id="PF00218">
    <property type="entry name" value="IGPS"/>
    <property type="match status" value="1"/>
</dbReference>
<dbReference type="SUPFAM" id="SSF51366">
    <property type="entry name" value="Ribulose-phoshate binding barrel"/>
    <property type="match status" value="1"/>
</dbReference>
<dbReference type="PROSITE" id="PS00614">
    <property type="entry name" value="IGPS"/>
    <property type="match status" value="1"/>
</dbReference>
<proteinExistence type="inferred from homology"/>